<organism>
    <name type="scientific">Escherichia coli (strain K12 / MC4100 / BW2952)</name>
    <dbReference type="NCBI Taxonomy" id="595496"/>
    <lineage>
        <taxon>Bacteria</taxon>
        <taxon>Pseudomonadati</taxon>
        <taxon>Pseudomonadota</taxon>
        <taxon>Gammaproteobacteria</taxon>
        <taxon>Enterobacterales</taxon>
        <taxon>Enterobacteriaceae</taxon>
        <taxon>Escherichia</taxon>
    </lineage>
</organism>
<gene>
    <name evidence="1" type="primary">btuC</name>
    <name type="ordered locus">BWG_1525</name>
</gene>
<feature type="chain" id="PRO_1000213143" description="Vitamin B12 import system permease protein BtuC">
    <location>
        <begin position="1"/>
        <end position="326"/>
    </location>
</feature>
<feature type="transmembrane region" description="Helical" evidence="1">
    <location>
        <begin position="15"/>
        <end position="35"/>
    </location>
</feature>
<feature type="transmembrane region" description="Helical" evidence="1">
    <location>
        <begin position="61"/>
        <end position="81"/>
    </location>
</feature>
<feature type="transmembrane region" description="Helical" evidence="1">
    <location>
        <begin position="88"/>
        <end position="108"/>
    </location>
</feature>
<feature type="transmembrane region" description="Helical" evidence="1">
    <location>
        <begin position="112"/>
        <end position="132"/>
    </location>
</feature>
<feature type="transmembrane region" description="Helical" evidence="1">
    <location>
        <begin position="146"/>
        <end position="166"/>
    </location>
</feature>
<feature type="transmembrane region" description="Helical" evidence="1">
    <location>
        <begin position="184"/>
        <end position="204"/>
    </location>
</feature>
<feature type="transmembrane region" description="Helical" evidence="1">
    <location>
        <begin position="240"/>
        <end position="260"/>
    </location>
</feature>
<feature type="transmembrane region" description="Helical" evidence="1">
    <location>
        <begin position="274"/>
        <end position="294"/>
    </location>
</feature>
<feature type="transmembrane region" description="Helical" evidence="1">
    <location>
        <begin position="302"/>
        <end position="322"/>
    </location>
</feature>
<proteinExistence type="inferred from homology"/>
<evidence type="ECO:0000255" key="1">
    <source>
        <dbReference type="HAMAP-Rule" id="MF_01004"/>
    </source>
</evidence>
<reference key="1">
    <citation type="journal article" date="2009" name="J. Bacteriol.">
        <title>Genomic sequencing reveals regulatory mutations and recombinational events in the widely used MC4100 lineage of Escherichia coli K-12.</title>
        <authorList>
            <person name="Ferenci T."/>
            <person name="Zhou Z."/>
            <person name="Betteridge T."/>
            <person name="Ren Y."/>
            <person name="Liu Y."/>
            <person name="Feng L."/>
            <person name="Reeves P.R."/>
            <person name="Wang L."/>
        </authorList>
    </citation>
    <scope>NUCLEOTIDE SEQUENCE [LARGE SCALE GENOMIC DNA]</scope>
    <source>
        <strain>K12 / MC4100 / BW2952</strain>
    </source>
</reference>
<sequence length="326" mass="34949">MLTLARQQQRQNIRWLLCLSVLMLLALLLSLCAGEQWISPGDWFTPRGELFVWQIRLPRTLAVLLVGAALAISGAVMQALFENPLAEPGLLGVSNGAGVGLIAAVLLGQGQLPNWALGLCAIAGALIITLILLRFARRHLSTSRLLLAGVALGIICSALMTWAIYFSTSVDLRQLMYWMMGGFGGVDWRQSWLMLALIPVLLWICCQSRPMNMLALGEISARQLGLPLWFWRNVLVAATGWMVGVSVALAGAIGFIGLVIPHILRLCGLTDHRVLLPGCALAGASALLLADIVARLALAAAELPIGVVTATLGAPVFIWLLLKAGR</sequence>
<accession>C4ZYH3</accession>
<keyword id="KW-0997">Cell inner membrane</keyword>
<keyword id="KW-1003">Cell membrane</keyword>
<keyword id="KW-0472">Membrane</keyword>
<keyword id="KW-0812">Transmembrane</keyword>
<keyword id="KW-1133">Transmembrane helix</keyword>
<keyword id="KW-0813">Transport</keyword>
<dbReference type="EMBL" id="CP001396">
    <property type="protein sequence ID" value="ACR65779.1"/>
    <property type="molecule type" value="Genomic_DNA"/>
</dbReference>
<dbReference type="RefSeq" id="WP_000956528.1">
    <property type="nucleotide sequence ID" value="NC_012759.1"/>
</dbReference>
<dbReference type="SMR" id="C4ZYH3"/>
<dbReference type="KEGG" id="ebw:BWG_1525"/>
<dbReference type="HOGENOM" id="CLU_013016_0_3_6"/>
<dbReference type="GO" id="GO:0005886">
    <property type="term" value="C:plasma membrane"/>
    <property type="evidence" value="ECO:0007669"/>
    <property type="project" value="UniProtKB-SubCell"/>
</dbReference>
<dbReference type="GO" id="GO:0090482">
    <property type="term" value="F:vitamin transmembrane transporter activity"/>
    <property type="evidence" value="ECO:0007669"/>
    <property type="project" value="UniProtKB-UniRule"/>
</dbReference>
<dbReference type="GO" id="GO:0015889">
    <property type="term" value="P:cobalamin transport"/>
    <property type="evidence" value="ECO:0007669"/>
    <property type="project" value="UniProtKB-UniRule"/>
</dbReference>
<dbReference type="CDD" id="cd06550">
    <property type="entry name" value="TM_ABC_iron-siderophores_like"/>
    <property type="match status" value="1"/>
</dbReference>
<dbReference type="FunFam" id="1.10.3470.10:FF:000001">
    <property type="entry name" value="Vitamin B12 ABC transporter permease BtuC"/>
    <property type="match status" value="1"/>
</dbReference>
<dbReference type="Gene3D" id="1.10.3470.10">
    <property type="entry name" value="ABC transporter involved in vitamin B12 uptake, BtuC"/>
    <property type="match status" value="1"/>
</dbReference>
<dbReference type="HAMAP" id="MF_01004">
    <property type="entry name" value="BtuC"/>
    <property type="match status" value="1"/>
</dbReference>
<dbReference type="InterPro" id="IPR037294">
    <property type="entry name" value="ABC_BtuC-like"/>
</dbReference>
<dbReference type="InterPro" id="IPR023691">
    <property type="entry name" value="ABC_transptr_BtuC"/>
</dbReference>
<dbReference type="InterPro" id="IPR000522">
    <property type="entry name" value="ABC_transptr_permease_BtuC"/>
</dbReference>
<dbReference type="NCBIfam" id="NF003001">
    <property type="entry name" value="PRK03784.1"/>
    <property type="match status" value="1"/>
</dbReference>
<dbReference type="PANTHER" id="PTHR30472">
    <property type="entry name" value="FERRIC ENTEROBACTIN TRANSPORT SYSTEM PERMEASE PROTEIN"/>
    <property type="match status" value="1"/>
</dbReference>
<dbReference type="PANTHER" id="PTHR30472:SF29">
    <property type="entry name" value="VITAMIN B12 IMPORT SYSTEM PERMEASE PROTEIN BTUC"/>
    <property type="match status" value="1"/>
</dbReference>
<dbReference type="Pfam" id="PF01032">
    <property type="entry name" value="FecCD"/>
    <property type="match status" value="1"/>
</dbReference>
<dbReference type="SUPFAM" id="SSF81345">
    <property type="entry name" value="ABC transporter involved in vitamin B12 uptake, BtuC"/>
    <property type="match status" value="1"/>
</dbReference>
<protein>
    <recommendedName>
        <fullName evidence="1">Vitamin B12 import system permease protein BtuC</fullName>
    </recommendedName>
</protein>
<name>BTUC_ECOBW</name>
<comment type="function">
    <text evidence="1">Part of the ABC transporter complex BtuCDF involved in vitamin B12 import. Involved in the translocation of the substrate across the membrane.</text>
</comment>
<comment type="subunit">
    <text evidence="1">The complex is composed of two ATP-binding proteins (BtuD), two transmembrane proteins (BtuC) and a solute-binding protein (BtuF).</text>
</comment>
<comment type="subcellular location">
    <subcellularLocation>
        <location evidence="1">Cell inner membrane</location>
        <topology evidence="1">Multi-pass membrane protein</topology>
    </subcellularLocation>
</comment>
<comment type="similarity">
    <text evidence="1">Belongs to the binding-protein-dependent transport system permease family. FecCD subfamily.</text>
</comment>